<name>ARMC1_MOUSE</name>
<gene>
    <name type="primary">Armc1</name>
</gene>
<feature type="chain" id="PRO_0000240883" description="Armadillo repeat-containing protein 1">
    <location>
        <begin position="1"/>
        <end position="282"/>
    </location>
</feature>
<feature type="repeat" description="ARM">
    <location>
        <begin position="39"/>
        <end position="81"/>
    </location>
</feature>
<feature type="region of interest" description="Disordered" evidence="2">
    <location>
        <begin position="239"/>
        <end position="261"/>
    </location>
</feature>
<feature type="compositionally biased region" description="Basic and acidic residues" evidence="2">
    <location>
        <begin position="246"/>
        <end position="255"/>
    </location>
</feature>
<feature type="modified residue" description="N-acetylmethionine" evidence="1">
    <location>
        <position position="1"/>
    </location>
</feature>
<feature type="modified residue" description="Phosphothreonine" evidence="1">
    <location>
        <position position="137"/>
    </location>
</feature>
<feature type="modified residue" description="Phosphoserine" evidence="1">
    <location>
        <position position="189"/>
    </location>
</feature>
<feature type="modified residue" description="Phosphoserine" evidence="4">
    <location>
        <position position="246"/>
    </location>
</feature>
<feature type="modified residue" description="Phosphoserine" evidence="1">
    <location>
        <position position="260"/>
    </location>
</feature>
<feature type="modified residue" description="Phosphoserine" evidence="4">
    <location>
        <position position="267"/>
    </location>
</feature>
<feature type="sequence conflict" description="In Ref. 1; BAC28724." evidence="3" ref="1">
    <original>L</original>
    <variation>W</variation>
    <location>
        <position position="135"/>
    </location>
</feature>
<dbReference type="EMBL" id="AK009402">
    <property type="protein sequence ID" value="BAB26266.1"/>
    <property type="molecule type" value="mRNA"/>
</dbReference>
<dbReference type="EMBL" id="AK034483">
    <property type="protein sequence ID" value="BAC28724.1"/>
    <property type="molecule type" value="mRNA"/>
</dbReference>
<dbReference type="EMBL" id="AK079299">
    <property type="protein sequence ID" value="BAC37600.1"/>
    <property type="molecule type" value="mRNA"/>
</dbReference>
<dbReference type="EMBL" id="AK082783">
    <property type="protein sequence ID" value="BAC38617.1"/>
    <property type="molecule type" value="mRNA"/>
</dbReference>
<dbReference type="EMBL" id="AK144184">
    <property type="protein sequence ID" value="BAE25753.1"/>
    <property type="molecule type" value="mRNA"/>
</dbReference>
<dbReference type="EMBL" id="AK145993">
    <property type="protein sequence ID" value="BAE26814.1"/>
    <property type="molecule type" value="mRNA"/>
</dbReference>
<dbReference type="EMBL" id="AK167233">
    <property type="protein sequence ID" value="BAE39357.1"/>
    <property type="molecule type" value="mRNA"/>
</dbReference>
<dbReference type="EMBL" id="BC021451">
    <property type="protein sequence ID" value="AAH21451.1"/>
    <property type="molecule type" value="mRNA"/>
</dbReference>
<dbReference type="EMBL" id="BC051067">
    <property type="protein sequence ID" value="AAH51067.1"/>
    <property type="molecule type" value="mRNA"/>
</dbReference>
<dbReference type="CCDS" id="CCDS17255.1"/>
<dbReference type="RefSeq" id="NP_083116.1">
    <property type="nucleotide sequence ID" value="NM_028840.3"/>
</dbReference>
<dbReference type="RefSeq" id="XP_030108706.1">
    <property type="nucleotide sequence ID" value="XM_030252846.2"/>
</dbReference>
<dbReference type="SMR" id="Q9D7A8"/>
<dbReference type="BioGRID" id="216608">
    <property type="interactions" value="1"/>
</dbReference>
<dbReference type="FunCoup" id="Q9D7A8">
    <property type="interactions" value="3862"/>
</dbReference>
<dbReference type="STRING" id="10090.ENSMUSP00000029125"/>
<dbReference type="GlyGen" id="Q9D7A8">
    <property type="glycosylation" value="1 site, 1 O-linked glycan (1 site)"/>
</dbReference>
<dbReference type="iPTMnet" id="Q9D7A8"/>
<dbReference type="PhosphoSitePlus" id="Q9D7A8"/>
<dbReference type="SwissPalm" id="Q9D7A8"/>
<dbReference type="jPOST" id="Q9D7A8"/>
<dbReference type="PaxDb" id="10090-ENSMUSP00000029125"/>
<dbReference type="PeptideAtlas" id="Q9D7A8"/>
<dbReference type="ProteomicsDB" id="277291"/>
<dbReference type="Pumba" id="Q9D7A8"/>
<dbReference type="Antibodypedia" id="11918">
    <property type="antibodies" value="215 antibodies from 19 providers"/>
</dbReference>
<dbReference type="Ensembl" id="ENSMUST00000029125.10">
    <property type="protein sequence ID" value="ENSMUSP00000029125.9"/>
    <property type="gene ID" value="ENSMUSG00000027599.10"/>
</dbReference>
<dbReference type="GeneID" id="74252"/>
<dbReference type="KEGG" id="mmu:74252"/>
<dbReference type="UCSC" id="uc008oro.1">
    <property type="organism name" value="mouse"/>
</dbReference>
<dbReference type="AGR" id="MGI:1921502"/>
<dbReference type="CTD" id="55156"/>
<dbReference type="MGI" id="MGI:1921502">
    <property type="gene designation" value="Armc1"/>
</dbReference>
<dbReference type="VEuPathDB" id="HostDB:ENSMUSG00000027599"/>
<dbReference type="eggNOG" id="ENOG502QU5Q">
    <property type="taxonomic scope" value="Eukaryota"/>
</dbReference>
<dbReference type="GeneTree" id="ENSGT00390000014100"/>
<dbReference type="HOGENOM" id="CLU_077781_0_0_1"/>
<dbReference type="InParanoid" id="Q9D7A8"/>
<dbReference type="OMA" id="VNEMNSC"/>
<dbReference type="OrthoDB" id="17335at2759"/>
<dbReference type="PhylomeDB" id="Q9D7A8"/>
<dbReference type="TreeFam" id="TF316742"/>
<dbReference type="BioGRID-ORCS" id="74252">
    <property type="hits" value="2 hits in 59 CRISPR screens"/>
</dbReference>
<dbReference type="ChiTaRS" id="Armc1">
    <property type="organism name" value="mouse"/>
</dbReference>
<dbReference type="PRO" id="PR:Q9D7A8"/>
<dbReference type="Proteomes" id="UP000000589">
    <property type="component" value="Chromosome 3"/>
</dbReference>
<dbReference type="RNAct" id="Q9D7A8">
    <property type="molecule type" value="protein"/>
</dbReference>
<dbReference type="Bgee" id="ENSMUSG00000027599">
    <property type="expression patterns" value="Expressed in lateral septal nucleus and 259 other cell types or tissues"/>
</dbReference>
<dbReference type="GO" id="GO:0005829">
    <property type="term" value="C:cytosol"/>
    <property type="evidence" value="ECO:0007669"/>
    <property type="project" value="Ensembl"/>
</dbReference>
<dbReference type="GO" id="GO:0005741">
    <property type="term" value="C:mitochondrial outer membrane"/>
    <property type="evidence" value="ECO:0007669"/>
    <property type="project" value="UniProtKB-SubCell"/>
</dbReference>
<dbReference type="GO" id="GO:0005739">
    <property type="term" value="C:mitochondrion"/>
    <property type="evidence" value="ECO:0007005"/>
    <property type="project" value="MGI"/>
</dbReference>
<dbReference type="GO" id="GO:0046872">
    <property type="term" value="F:metal ion binding"/>
    <property type="evidence" value="ECO:0007669"/>
    <property type="project" value="InterPro"/>
</dbReference>
<dbReference type="GO" id="GO:0048312">
    <property type="term" value="P:intracellular distribution of mitochondria"/>
    <property type="evidence" value="ECO:0007669"/>
    <property type="project" value="Ensembl"/>
</dbReference>
<dbReference type="FunFam" id="1.25.10.10:FF:000365">
    <property type="entry name" value="Armadillo repeat-containing protein 1"/>
    <property type="match status" value="1"/>
</dbReference>
<dbReference type="Gene3D" id="1.25.10.10">
    <property type="entry name" value="Leucine-rich Repeat Variant"/>
    <property type="match status" value="1"/>
</dbReference>
<dbReference type="InterPro" id="IPR011989">
    <property type="entry name" value="ARM-like"/>
</dbReference>
<dbReference type="InterPro" id="IPR016024">
    <property type="entry name" value="ARM-type_fold"/>
</dbReference>
<dbReference type="InterPro" id="IPR000225">
    <property type="entry name" value="Armadillo"/>
</dbReference>
<dbReference type="InterPro" id="IPR016617">
    <property type="entry name" value="ARMC1"/>
</dbReference>
<dbReference type="InterPro" id="IPR036163">
    <property type="entry name" value="HMA_dom_sf"/>
</dbReference>
<dbReference type="PANTHER" id="PTHR46840">
    <property type="entry name" value="ARMADILLO REPEAT-CONTAINING PROTEIN 1"/>
    <property type="match status" value="1"/>
</dbReference>
<dbReference type="PANTHER" id="PTHR46840:SF1">
    <property type="entry name" value="ARMADILLO REPEAT-CONTAINING PROTEIN 1"/>
    <property type="match status" value="1"/>
</dbReference>
<dbReference type="Pfam" id="PF00514">
    <property type="entry name" value="Arm"/>
    <property type="match status" value="1"/>
</dbReference>
<dbReference type="PIRSF" id="PIRSF013899">
    <property type="entry name" value="UCP013899"/>
    <property type="match status" value="1"/>
</dbReference>
<dbReference type="SUPFAM" id="SSF48371">
    <property type="entry name" value="ARM repeat"/>
    <property type="match status" value="1"/>
</dbReference>
<dbReference type="SUPFAM" id="SSF55008">
    <property type="entry name" value="HMA, heavy metal-associated domain"/>
    <property type="match status" value="1"/>
</dbReference>
<organism>
    <name type="scientific">Mus musculus</name>
    <name type="common">Mouse</name>
    <dbReference type="NCBI Taxonomy" id="10090"/>
    <lineage>
        <taxon>Eukaryota</taxon>
        <taxon>Metazoa</taxon>
        <taxon>Chordata</taxon>
        <taxon>Craniata</taxon>
        <taxon>Vertebrata</taxon>
        <taxon>Euteleostomi</taxon>
        <taxon>Mammalia</taxon>
        <taxon>Eutheria</taxon>
        <taxon>Euarchontoglires</taxon>
        <taxon>Glires</taxon>
        <taxon>Rodentia</taxon>
        <taxon>Myomorpha</taxon>
        <taxon>Muroidea</taxon>
        <taxon>Muridae</taxon>
        <taxon>Murinae</taxon>
        <taxon>Mus</taxon>
        <taxon>Mus</taxon>
    </lineage>
</organism>
<reference key="1">
    <citation type="journal article" date="2005" name="Science">
        <title>The transcriptional landscape of the mammalian genome.</title>
        <authorList>
            <person name="Carninci P."/>
            <person name="Kasukawa T."/>
            <person name="Katayama S."/>
            <person name="Gough J."/>
            <person name="Frith M.C."/>
            <person name="Maeda N."/>
            <person name="Oyama R."/>
            <person name="Ravasi T."/>
            <person name="Lenhard B."/>
            <person name="Wells C."/>
            <person name="Kodzius R."/>
            <person name="Shimokawa K."/>
            <person name="Bajic V.B."/>
            <person name="Brenner S.E."/>
            <person name="Batalov S."/>
            <person name="Forrest A.R."/>
            <person name="Zavolan M."/>
            <person name="Davis M.J."/>
            <person name="Wilming L.G."/>
            <person name="Aidinis V."/>
            <person name="Allen J.E."/>
            <person name="Ambesi-Impiombato A."/>
            <person name="Apweiler R."/>
            <person name="Aturaliya R.N."/>
            <person name="Bailey T.L."/>
            <person name="Bansal M."/>
            <person name="Baxter L."/>
            <person name="Beisel K.W."/>
            <person name="Bersano T."/>
            <person name="Bono H."/>
            <person name="Chalk A.M."/>
            <person name="Chiu K.P."/>
            <person name="Choudhary V."/>
            <person name="Christoffels A."/>
            <person name="Clutterbuck D.R."/>
            <person name="Crowe M.L."/>
            <person name="Dalla E."/>
            <person name="Dalrymple B.P."/>
            <person name="de Bono B."/>
            <person name="Della Gatta G."/>
            <person name="di Bernardo D."/>
            <person name="Down T."/>
            <person name="Engstrom P."/>
            <person name="Fagiolini M."/>
            <person name="Faulkner G."/>
            <person name="Fletcher C.F."/>
            <person name="Fukushima T."/>
            <person name="Furuno M."/>
            <person name="Futaki S."/>
            <person name="Gariboldi M."/>
            <person name="Georgii-Hemming P."/>
            <person name="Gingeras T.R."/>
            <person name="Gojobori T."/>
            <person name="Green R.E."/>
            <person name="Gustincich S."/>
            <person name="Harbers M."/>
            <person name="Hayashi Y."/>
            <person name="Hensch T.K."/>
            <person name="Hirokawa N."/>
            <person name="Hill D."/>
            <person name="Huminiecki L."/>
            <person name="Iacono M."/>
            <person name="Ikeo K."/>
            <person name="Iwama A."/>
            <person name="Ishikawa T."/>
            <person name="Jakt M."/>
            <person name="Kanapin A."/>
            <person name="Katoh M."/>
            <person name="Kawasawa Y."/>
            <person name="Kelso J."/>
            <person name="Kitamura H."/>
            <person name="Kitano H."/>
            <person name="Kollias G."/>
            <person name="Krishnan S.P."/>
            <person name="Kruger A."/>
            <person name="Kummerfeld S.K."/>
            <person name="Kurochkin I.V."/>
            <person name="Lareau L.F."/>
            <person name="Lazarevic D."/>
            <person name="Lipovich L."/>
            <person name="Liu J."/>
            <person name="Liuni S."/>
            <person name="McWilliam S."/>
            <person name="Madan Babu M."/>
            <person name="Madera M."/>
            <person name="Marchionni L."/>
            <person name="Matsuda H."/>
            <person name="Matsuzawa S."/>
            <person name="Miki H."/>
            <person name="Mignone F."/>
            <person name="Miyake S."/>
            <person name="Morris K."/>
            <person name="Mottagui-Tabar S."/>
            <person name="Mulder N."/>
            <person name="Nakano N."/>
            <person name="Nakauchi H."/>
            <person name="Ng P."/>
            <person name="Nilsson R."/>
            <person name="Nishiguchi S."/>
            <person name="Nishikawa S."/>
            <person name="Nori F."/>
            <person name="Ohara O."/>
            <person name="Okazaki Y."/>
            <person name="Orlando V."/>
            <person name="Pang K.C."/>
            <person name="Pavan W.J."/>
            <person name="Pavesi G."/>
            <person name="Pesole G."/>
            <person name="Petrovsky N."/>
            <person name="Piazza S."/>
            <person name="Reed J."/>
            <person name="Reid J.F."/>
            <person name="Ring B.Z."/>
            <person name="Ringwald M."/>
            <person name="Rost B."/>
            <person name="Ruan Y."/>
            <person name="Salzberg S.L."/>
            <person name="Sandelin A."/>
            <person name="Schneider C."/>
            <person name="Schoenbach C."/>
            <person name="Sekiguchi K."/>
            <person name="Semple C.A."/>
            <person name="Seno S."/>
            <person name="Sessa L."/>
            <person name="Sheng Y."/>
            <person name="Shibata Y."/>
            <person name="Shimada H."/>
            <person name="Shimada K."/>
            <person name="Silva D."/>
            <person name="Sinclair B."/>
            <person name="Sperling S."/>
            <person name="Stupka E."/>
            <person name="Sugiura K."/>
            <person name="Sultana R."/>
            <person name="Takenaka Y."/>
            <person name="Taki K."/>
            <person name="Tammoja K."/>
            <person name="Tan S.L."/>
            <person name="Tang S."/>
            <person name="Taylor M.S."/>
            <person name="Tegner J."/>
            <person name="Teichmann S.A."/>
            <person name="Ueda H.R."/>
            <person name="van Nimwegen E."/>
            <person name="Verardo R."/>
            <person name="Wei C.L."/>
            <person name="Yagi K."/>
            <person name="Yamanishi H."/>
            <person name="Zabarovsky E."/>
            <person name="Zhu S."/>
            <person name="Zimmer A."/>
            <person name="Hide W."/>
            <person name="Bult C."/>
            <person name="Grimmond S.M."/>
            <person name="Teasdale R.D."/>
            <person name="Liu E.T."/>
            <person name="Brusic V."/>
            <person name="Quackenbush J."/>
            <person name="Wahlestedt C."/>
            <person name="Mattick J.S."/>
            <person name="Hume D.A."/>
            <person name="Kai C."/>
            <person name="Sasaki D."/>
            <person name="Tomaru Y."/>
            <person name="Fukuda S."/>
            <person name="Kanamori-Katayama M."/>
            <person name="Suzuki M."/>
            <person name="Aoki J."/>
            <person name="Arakawa T."/>
            <person name="Iida J."/>
            <person name="Imamura K."/>
            <person name="Itoh M."/>
            <person name="Kato T."/>
            <person name="Kawaji H."/>
            <person name="Kawagashira N."/>
            <person name="Kawashima T."/>
            <person name="Kojima M."/>
            <person name="Kondo S."/>
            <person name="Konno H."/>
            <person name="Nakano K."/>
            <person name="Ninomiya N."/>
            <person name="Nishio T."/>
            <person name="Okada M."/>
            <person name="Plessy C."/>
            <person name="Shibata K."/>
            <person name="Shiraki T."/>
            <person name="Suzuki S."/>
            <person name="Tagami M."/>
            <person name="Waki K."/>
            <person name="Watahiki A."/>
            <person name="Okamura-Oho Y."/>
            <person name="Suzuki H."/>
            <person name="Kawai J."/>
            <person name="Hayashizaki Y."/>
        </authorList>
    </citation>
    <scope>NUCLEOTIDE SEQUENCE [LARGE SCALE MRNA]</scope>
    <source>
        <strain>C57BL/6J</strain>
        <tissue>Placenta</tissue>
        <tissue>Tongue</tissue>
        <tissue>Urinary bladder</tissue>
    </source>
</reference>
<reference key="2">
    <citation type="journal article" date="2004" name="Genome Res.">
        <title>The status, quality, and expansion of the NIH full-length cDNA project: the Mammalian Gene Collection (MGC).</title>
        <authorList>
            <consortium name="The MGC Project Team"/>
        </authorList>
    </citation>
    <scope>NUCLEOTIDE SEQUENCE [LARGE SCALE MRNA]</scope>
    <source>
        <strain>C57BL/6J</strain>
        <strain>FVB/N</strain>
        <tissue>Kidney</tissue>
        <tissue>Mammary tumor</tissue>
    </source>
</reference>
<reference key="3">
    <citation type="journal article" date="2006" name="Mol. Cell. Proteomics">
        <title>Comprehensive identification of phosphorylation sites in postsynaptic density preparations.</title>
        <authorList>
            <person name="Trinidad J.C."/>
            <person name="Specht C.G."/>
            <person name="Thalhammer A."/>
            <person name="Schoepfer R."/>
            <person name="Burlingame A.L."/>
        </authorList>
    </citation>
    <scope>IDENTIFICATION BY MASS SPECTROMETRY [LARGE SCALE ANALYSIS]</scope>
    <source>
        <tissue>Brain</tissue>
    </source>
</reference>
<reference key="4">
    <citation type="journal article" date="2010" name="Cell">
        <title>A tissue-specific atlas of mouse protein phosphorylation and expression.</title>
        <authorList>
            <person name="Huttlin E.L."/>
            <person name="Jedrychowski M.P."/>
            <person name="Elias J.E."/>
            <person name="Goswami T."/>
            <person name="Rad R."/>
            <person name="Beausoleil S.A."/>
            <person name="Villen J."/>
            <person name="Haas W."/>
            <person name="Sowa M.E."/>
            <person name="Gygi S.P."/>
        </authorList>
    </citation>
    <scope>PHOSPHORYLATION [LARGE SCALE ANALYSIS] AT SER-246 AND SER-267</scope>
    <scope>IDENTIFICATION BY MASS SPECTROMETRY [LARGE SCALE ANALYSIS]</scope>
    <source>
        <tissue>Brain</tissue>
        <tissue>Brown adipose tissue</tissue>
        <tissue>Heart</tissue>
        <tissue>Kidney</tissue>
        <tissue>Liver</tissue>
        <tissue>Lung</tissue>
        <tissue>Pancreas</tissue>
        <tissue>Spleen</tissue>
        <tissue>Testis</tissue>
    </source>
</reference>
<protein>
    <recommendedName>
        <fullName>Armadillo repeat-containing protein 1</fullName>
    </recommendedName>
</protein>
<accession>Q9D7A8</accession>
<accession>Q8CBW1</accession>
<proteinExistence type="evidence at protein level"/>
<comment type="function">
    <text evidence="1">In association with mitochondrial contact site and cristae organizing system (MICOS) complex components and mitochondrial outer membrane sorting assembly machinery (SAM) complex components may regulate mitochondrial dynamics playing a role in determining mitochondrial length, distribution and motility.</text>
</comment>
<comment type="subunit">
    <text evidence="1">Interacts with mitochondrial contact site and cristae organizing system (MICOS) complex components IMMT/MIC60 and MICOS10/MIC10 (By similarity). Interacts with mitochondrial outer membrane sorting assembly machinery (SAM) complex components SAMM50 and MTX1 (By similarity).</text>
</comment>
<comment type="subcellular location">
    <subcellularLocation>
        <location evidence="1">Cytoplasm</location>
    </subcellularLocation>
    <subcellularLocation>
        <location evidence="1">Mitochondrion</location>
    </subcellularLocation>
    <subcellularLocation>
        <location evidence="1">Mitochondrion outer membrane</location>
    </subcellularLocation>
    <text evidence="1">Associates with the outer mitochondrion membrane, most likely through its C-terminus (By similarity). Not integrated into the mitochondrial outer membrane (By similarity).</text>
</comment>
<sequence>MNSSSSTMNEEPDALSVVNQLRDLAADPLNRRAIVQDQGCLPGLILFMDHPNPPVVHSALLALRYLAECRANREKMKGELGMMLSLQNVIQKTTTPGETKLLASEIYDILQSSNLADGDSFNEMNSRRRKAQFFLGTTNKRAKTVVLHIDGLDDTSRRNLCEEALLKIKGVISFTFQMAVQRCVVRIRSDLKAEALASAIASTKVMKAQQVVKSESGEEMLVPFQDAPVEVEENTELPDYLPEDESPTKEQDKAVSRVGSHPEGGASWLSTAANFLSRSFYW</sequence>
<evidence type="ECO:0000250" key="1">
    <source>
        <dbReference type="UniProtKB" id="Q9NVT9"/>
    </source>
</evidence>
<evidence type="ECO:0000256" key="2">
    <source>
        <dbReference type="SAM" id="MobiDB-lite"/>
    </source>
</evidence>
<evidence type="ECO:0000305" key="3"/>
<evidence type="ECO:0007744" key="4">
    <source>
    </source>
</evidence>
<keyword id="KW-0007">Acetylation</keyword>
<keyword id="KW-0963">Cytoplasm</keyword>
<keyword id="KW-0472">Membrane</keyword>
<keyword id="KW-0496">Mitochondrion</keyword>
<keyword id="KW-1000">Mitochondrion outer membrane</keyword>
<keyword id="KW-0597">Phosphoprotein</keyword>
<keyword id="KW-1185">Reference proteome</keyword>